<comment type="function">
    <text evidence="1">NDH-1 shuttles electrons from NADH, via FMN and iron-sulfur (Fe-S) centers, to quinones in the respiratory chain. Couples the redox reaction to proton translocation (for every two electrons transferred, four hydrogen ions are translocated across the cytoplasmic membrane), and thus conserves the redox energy in a proton gradient (By similarity).</text>
</comment>
<comment type="catalytic activity">
    <reaction>
        <text>a quinone + NADH + 5 H(+)(in) = a quinol + NAD(+) + 4 H(+)(out)</text>
        <dbReference type="Rhea" id="RHEA:57888"/>
        <dbReference type="ChEBI" id="CHEBI:15378"/>
        <dbReference type="ChEBI" id="CHEBI:24646"/>
        <dbReference type="ChEBI" id="CHEBI:57540"/>
        <dbReference type="ChEBI" id="CHEBI:57945"/>
        <dbReference type="ChEBI" id="CHEBI:132124"/>
    </reaction>
</comment>
<comment type="cofactor">
    <cofactor evidence="3">
        <name>FMN</name>
        <dbReference type="ChEBI" id="CHEBI:58210"/>
    </cofactor>
    <text evidence="3">Binds 1 FMN.</text>
</comment>
<comment type="cofactor">
    <cofactor evidence="3">
        <name>[4Fe-4S] cluster</name>
        <dbReference type="ChEBI" id="CHEBI:49883"/>
    </cofactor>
    <text evidence="3">Binds 1 [4Fe-4S] cluster.</text>
</comment>
<comment type="similarity">
    <text evidence="3">Belongs to the complex I 51 kDa subunit family.</text>
</comment>
<organism>
    <name type="scientific">Aquifex aeolicus (strain VF5)</name>
    <dbReference type="NCBI Taxonomy" id="224324"/>
    <lineage>
        <taxon>Bacteria</taxon>
        <taxon>Pseudomonadati</taxon>
        <taxon>Aquificota</taxon>
        <taxon>Aquificia</taxon>
        <taxon>Aquificales</taxon>
        <taxon>Aquificaceae</taxon>
        <taxon>Aquifex</taxon>
    </lineage>
</organism>
<name>NUOF_AQUAE</name>
<protein>
    <recommendedName>
        <fullName>NADH-quinone oxidoreductase subunit F</fullName>
        <ecNumber>7.1.1.-</ecNumber>
    </recommendedName>
    <alternativeName>
        <fullName>NADH dehydrogenase I subunit F</fullName>
    </alternativeName>
    <alternativeName>
        <fullName>NDH-1 subunit F</fullName>
    </alternativeName>
</protein>
<proteinExistence type="evidence at protein level"/>
<evidence type="ECO:0000250" key="1"/>
<evidence type="ECO:0000255" key="2"/>
<evidence type="ECO:0000305" key="3"/>
<evidence type="ECO:0007829" key="4">
    <source>
        <dbReference type="PDB" id="6HLM"/>
    </source>
</evidence>
<evidence type="ECO:0007829" key="5">
    <source>
        <dbReference type="PDB" id="8QGW"/>
    </source>
</evidence>
<accession>O66841</accession>
<gene>
    <name type="primary">nuoF</name>
    <name type="ordered locus">aq_573</name>
</gene>
<reference key="1">
    <citation type="journal article" date="1998" name="Nature">
        <title>The complete genome of the hyperthermophilic bacterium Aquifex aeolicus.</title>
        <authorList>
            <person name="Deckert G."/>
            <person name="Warren P.V."/>
            <person name="Gaasterland T."/>
            <person name="Young W.G."/>
            <person name="Lenox A.L."/>
            <person name="Graham D.E."/>
            <person name="Overbeek R."/>
            <person name="Snead M.A."/>
            <person name="Keller M."/>
            <person name="Aujay M."/>
            <person name="Huber R."/>
            <person name="Feldman R.A."/>
            <person name="Short J.M."/>
            <person name="Olsen G.J."/>
            <person name="Swanson R.V."/>
        </authorList>
    </citation>
    <scope>NUCLEOTIDE SEQUENCE [LARGE SCALE GENOMIC DNA]</scope>
    <source>
        <strain>VF5</strain>
    </source>
</reference>
<dbReference type="EC" id="7.1.1.-"/>
<dbReference type="EMBL" id="AE000657">
    <property type="protein sequence ID" value="AAC06800.1"/>
    <property type="molecule type" value="Genomic_DNA"/>
</dbReference>
<dbReference type="PIR" id="E70351">
    <property type="entry name" value="E70351"/>
</dbReference>
<dbReference type="RefSeq" id="NP_213401.1">
    <property type="nucleotide sequence ID" value="NC_000918.1"/>
</dbReference>
<dbReference type="RefSeq" id="WP_010880339.1">
    <property type="nucleotide sequence ID" value="NC_000918.1"/>
</dbReference>
<dbReference type="PDB" id="6HL2">
    <property type="method" value="X-ray"/>
    <property type="resolution" value="1.95 A"/>
    <property type="chains" value="B/D=1-426"/>
</dbReference>
<dbReference type="PDB" id="6HL3">
    <property type="method" value="X-ray"/>
    <property type="resolution" value="2.04 A"/>
    <property type="chains" value="B/D=1-426"/>
</dbReference>
<dbReference type="PDB" id="6HL4">
    <property type="method" value="X-ray"/>
    <property type="resolution" value="2.06 A"/>
    <property type="chains" value="B/D=1-426"/>
</dbReference>
<dbReference type="PDB" id="6HLA">
    <property type="method" value="X-ray"/>
    <property type="resolution" value="1.90 A"/>
    <property type="chains" value="B/D=1-426"/>
</dbReference>
<dbReference type="PDB" id="6HLI">
    <property type="method" value="X-ray"/>
    <property type="resolution" value="2.38 A"/>
    <property type="chains" value="B/D=1-426"/>
</dbReference>
<dbReference type="PDB" id="6HLJ">
    <property type="method" value="X-ray"/>
    <property type="resolution" value="2.10 A"/>
    <property type="chains" value="B/D=1-426"/>
</dbReference>
<dbReference type="PDB" id="6HLM">
    <property type="method" value="X-ray"/>
    <property type="resolution" value="1.80 A"/>
    <property type="chains" value="B/D=1-426"/>
</dbReference>
<dbReference type="PDB" id="6Q9C">
    <property type="method" value="X-ray"/>
    <property type="resolution" value="1.78 A"/>
    <property type="chains" value="B/D=2-419"/>
</dbReference>
<dbReference type="PDB" id="6Q9G">
    <property type="method" value="X-ray"/>
    <property type="resolution" value="2.10 A"/>
    <property type="chains" value="B/D=1-426"/>
</dbReference>
<dbReference type="PDB" id="6Q9J">
    <property type="method" value="X-ray"/>
    <property type="resolution" value="1.83 A"/>
    <property type="chains" value="B/D=1-426"/>
</dbReference>
<dbReference type="PDB" id="6Q9K">
    <property type="method" value="X-ray"/>
    <property type="resolution" value="1.99 A"/>
    <property type="chains" value="B/D=2-419"/>
</dbReference>
<dbReference type="PDB" id="6R7P">
    <property type="method" value="X-ray"/>
    <property type="resolution" value="3.22 A"/>
    <property type="chains" value="B/D=1-426"/>
</dbReference>
<dbReference type="PDB" id="6SAQ">
    <property type="method" value="X-ray"/>
    <property type="resolution" value="2.02 A"/>
    <property type="chains" value="B/D=1-426"/>
</dbReference>
<dbReference type="PDB" id="7Q5Y">
    <property type="method" value="X-ray"/>
    <property type="resolution" value="2.70 A"/>
    <property type="chains" value="C/I/O/U=1-426"/>
</dbReference>
<dbReference type="PDB" id="8QG1">
    <property type="method" value="X-ray"/>
    <property type="resolution" value="2.00 A"/>
    <property type="chains" value="B/D=1-426"/>
</dbReference>
<dbReference type="PDB" id="8QGW">
    <property type="method" value="X-ray"/>
    <property type="resolution" value="1.60 A"/>
    <property type="chains" value="B/D=1-426"/>
</dbReference>
<dbReference type="PDB" id="8QH4">
    <property type="method" value="X-ray"/>
    <property type="resolution" value="1.96 A"/>
    <property type="chains" value="B/D=1-426"/>
</dbReference>
<dbReference type="PDB" id="8QH7">
    <property type="method" value="X-ray"/>
    <property type="resolution" value="1.85 A"/>
    <property type="chains" value="B/D=1-426"/>
</dbReference>
<dbReference type="PDB" id="8QHK">
    <property type="method" value="X-ray"/>
    <property type="resolution" value="1.95 A"/>
    <property type="chains" value="B/D=1-426"/>
</dbReference>
<dbReference type="PDB" id="9FDJ">
    <property type="method" value="X-ray"/>
    <property type="resolution" value="1.70 A"/>
    <property type="chains" value="B/D=1-426"/>
</dbReference>
<dbReference type="PDB" id="9FDK">
    <property type="method" value="X-ray"/>
    <property type="resolution" value="1.80 A"/>
    <property type="chains" value="B/D=1-426"/>
</dbReference>
<dbReference type="PDB" id="9FDV">
    <property type="method" value="X-ray"/>
    <property type="resolution" value="1.99 A"/>
    <property type="chains" value="B/D=1-426"/>
</dbReference>
<dbReference type="PDB" id="9FE0">
    <property type="method" value="X-ray"/>
    <property type="resolution" value="2.20 A"/>
    <property type="chains" value="B/D=1-426"/>
</dbReference>
<dbReference type="PDB" id="9FE5">
    <property type="method" value="X-ray"/>
    <property type="resolution" value="2.10 A"/>
    <property type="chains" value="B/D=1-426"/>
</dbReference>
<dbReference type="PDB" id="9FE7">
    <property type="method" value="X-ray"/>
    <property type="resolution" value="2.28 A"/>
    <property type="chains" value="B/D=1-426"/>
</dbReference>
<dbReference type="PDB" id="9FE8">
    <property type="method" value="X-ray"/>
    <property type="resolution" value="2.34 A"/>
    <property type="chains" value="B/D=1-426"/>
</dbReference>
<dbReference type="PDB" id="9FEA">
    <property type="method" value="X-ray"/>
    <property type="resolution" value="1.66 A"/>
    <property type="chains" value="B/D=1-426"/>
</dbReference>
<dbReference type="PDB" id="9FIF">
    <property type="method" value="X-ray"/>
    <property type="resolution" value="1.77 A"/>
    <property type="chains" value="B/D=1-426"/>
</dbReference>
<dbReference type="PDB" id="9FIH">
    <property type="method" value="X-ray"/>
    <property type="resolution" value="2.08 A"/>
    <property type="chains" value="B/D=1-426"/>
</dbReference>
<dbReference type="PDB" id="9FII">
    <property type="method" value="X-ray"/>
    <property type="resolution" value="2.50 A"/>
    <property type="chains" value="B/D=1-426"/>
</dbReference>
<dbReference type="PDB" id="9FIJ">
    <property type="method" value="X-ray"/>
    <property type="resolution" value="2.35 A"/>
    <property type="chains" value="B/D=1-426"/>
</dbReference>
<dbReference type="PDB" id="9FIL">
    <property type="method" value="X-ray"/>
    <property type="resolution" value="2.54 A"/>
    <property type="chains" value="B/D=1-426"/>
</dbReference>
<dbReference type="PDBsum" id="6HL2"/>
<dbReference type="PDBsum" id="6HL3"/>
<dbReference type="PDBsum" id="6HL4"/>
<dbReference type="PDBsum" id="6HLA"/>
<dbReference type="PDBsum" id="6HLI"/>
<dbReference type="PDBsum" id="6HLJ"/>
<dbReference type="PDBsum" id="6HLM"/>
<dbReference type="PDBsum" id="6Q9C"/>
<dbReference type="PDBsum" id="6Q9G"/>
<dbReference type="PDBsum" id="6Q9J"/>
<dbReference type="PDBsum" id="6Q9K"/>
<dbReference type="PDBsum" id="6R7P"/>
<dbReference type="PDBsum" id="6SAQ"/>
<dbReference type="PDBsum" id="7Q5Y"/>
<dbReference type="PDBsum" id="8QG1"/>
<dbReference type="PDBsum" id="8QGW"/>
<dbReference type="PDBsum" id="8QH4"/>
<dbReference type="PDBsum" id="8QH7"/>
<dbReference type="PDBsum" id="8QHK"/>
<dbReference type="PDBsum" id="9FDJ"/>
<dbReference type="PDBsum" id="9FDK"/>
<dbReference type="PDBsum" id="9FDV"/>
<dbReference type="PDBsum" id="9FE0"/>
<dbReference type="PDBsum" id="9FE5"/>
<dbReference type="PDBsum" id="9FE7"/>
<dbReference type="PDBsum" id="9FE8"/>
<dbReference type="PDBsum" id="9FEA"/>
<dbReference type="PDBsum" id="9FIF"/>
<dbReference type="PDBsum" id="9FIH"/>
<dbReference type="PDBsum" id="9FII"/>
<dbReference type="PDBsum" id="9FIJ"/>
<dbReference type="PDBsum" id="9FIL"/>
<dbReference type="SMR" id="O66841"/>
<dbReference type="FunCoup" id="O66841">
    <property type="interactions" value="343"/>
</dbReference>
<dbReference type="STRING" id="224324.aq_573"/>
<dbReference type="EnsemblBacteria" id="AAC06800">
    <property type="protein sequence ID" value="AAC06800"/>
    <property type="gene ID" value="aq_573"/>
</dbReference>
<dbReference type="KEGG" id="aae:aq_573"/>
<dbReference type="PATRIC" id="fig|224324.8.peg.468"/>
<dbReference type="eggNOG" id="COG1894">
    <property type="taxonomic scope" value="Bacteria"/>
</dbReference>
<dbReference type="HOGENOM" id="CLU_014881_0_1_0"/>
<dbReference type="InParanoid" id="O66841"/>
<dbReference type="OrthoDB" id="9761899at2"/>
<dbReference type="Proteomes" id="UP000000798">
    <property type="component" value="Chromosome"/>
</dbReference>
<dbReference type="GO" id="GO:0051539">
    <property type="term" value="F:4 iron, 4 sulfur cluster binding"/>
    <property type="evidence" value="ECO:0007669"/>
    <property type="project" value="UniProtKB-KW"/>
</dbReference>
<dbReference type="GO" id="GO:0010181">
    <property type="term" value="F:FMN binding"/>
    <property type="evidence" value="ECO:0007669"/>
    <property type="project" value="InterPro"/>
</dbReference>
<dbReference type="GO" id="GO:0046872">
    <property type="term" value="F:metal ion binding"/>
    <property type="evidence" value="ECO:0007669"/>
    <property type="project" value="UniProtKB-KW"/>
</dbReference>
<dbReference type="GO" id="GO:0008137">
    <property type="term" value="F:NADH dehydrogenase (ubiquinone) activity"/>
    <property type="evidence" value="ECO:0007669"/>
    <property type="project" value="InterPro"/>
</dbReference>
<dbReference type="GO" id="GO:0048038">
    <property type="term" value="F:quinone binding"/>
    <property type="evidence" value="ECO:0007669"/>
    <property type="project" value="UniProtKB-KW"/>
</dbReference>
<dbReference type="FunFam" id="3.40.50.11540:FF:000001">
    <property type="entry name" value="NADH dehydrogenase [ubiquinone] flavoprotein 1, mitochondrial"/>
    <property type="match status" value="1"/>
</dbReference>
<dbReference type="Gene3D" id="3.10.20.600">
    <property type="match status" value="1"/>
</dbReference>
<dbReference type="Gene3D" id="6.10.250.1450">
    <property type="match status" value="1"/>
</dbReference>
<dbReference type="Gene3D" id="3.40.50.11540">
    <property type="entry name" value="NADH-ubiquinone oxidoreductase 51kDa subunit"/>
    <property type="match status" value="1"/>
</dbReference>
<dbReference type="Gene3D" id="1.20.1440.230">
    <property type="entry name" value="NADH-ubiquinone oxidoreductase 51kDa subunit, iron-sulphur binding domain"/>
    <property type="match status" value="1"/>
</dbReference>
<dbReference type="InterPro" id="IPR001949">
    <property type="entry name" value="NADH-UbQ_OxRdtase_51kDa_CS"/>
</dbReference>
<dbReference type="InterPro" id="IPR011538">
    <property type="entry name" value="Nuo51_FMN-bd"/>
</dbReference>
<dbReference type="InterPro" id="IPR037225">
    <property type="entry name" value="Nuo51_FMN-bd_sf"/>
</dbReference>
<dbReference type="InterPro" id="IPR019575">
    <property type="entry name" value="Nuop51_4Fe4S-bd"/>
</dbReference>
<dbReference type="InterPro" id="IPR037207">
    <property type="entry name" value="Nuop51_4Fe4S-bd_sf"/>
</dbReference>
<dbReference type="InterPro" id="IPR019554">
    <property type="entry name" value="Soluble_ligand-bd"/>
</dbReference>
<dbReference type="NCBIfam" id="NF010120">
    <property type="entry name" value="PRK13596.1"/>
    <property type="match status" value="1"/>
</dbReference>
<dbReference type="PANTHER" id="PTHR43578">
    <property type="entry name" value="NADH-QUINONE OXIDOREDUCTASE SUBUNIT F"/>
    <property type="match status" value="1"/>
</dbReference>
<dbReference type="PANTHER" id="PTHR43578:SF3">
    <property type="entry name" value="NADH-QUINONE OXIDOREDUCTASE SUBUNIT F"/>
    <property type="match status" value="1"/>
</dbReference>
<dbReference type="Pfam" id="PF01512">
    <property type="entry name" value="Complex1_51K"/>
    <property type="match status" value="1"/>
</dbReference>
<dbReference type="Pfam" id="PF10589">
    <property type="entry name" value="NADH_4Fe-4S"/>
    <property type="match status" value="1"/>
</dbReference>
<dbReference type="Pfam" id="PF10531">
    <property type="entry name" value="SLBB"/>
    <property type="match status" value="1"/>
</dbReference>
<dbReference type="SMART" id="SM00928">
    <property type="entry name" value="NADH_4Fe-4S"/>
    <property type="match status" value="1"/>
</dbReference>
<dbReference type="SUPFAM" id="SSF142019">
    <property type="entry name" value="Nqo1 FMN-binding domain-like"/>
    <property type="match status" value="1"/>
</dbReference>
<dbReference type="SUPFAM" id="SSF142984">
    <property type="entry name" value="Nqo1 middle domain-like"/>
    <property type="match status" value="1"/>
</dbReference>
<dbReference type="SUPFAM" id="SSF140490">
    <property type="entry name" value="Nqo1C-terminal domain-like"/>
    <property type="match status" value="1"/>
</dbReference>
<dbReference type="PROSITE" id="PS00644">
    <property type="entry name" value="COMPLEX1_51K_1"/>
    <property type="match status" value="1"/>
</dbReference>
<dbReference type="PROSITE" id="PS00645">
    <property type="entry name" value="COMPLEX1_51K_2"/>
    <property type="match status" value="1"/>
</dbReference>
<sequence length="426" mass="47508">MRSYPAIPRIYAETTLNMLLKRAKKPRVHSIDEYLKDGGYQALEKALNMSPEEIIDWVDKSTLRGRGGAGFPTGKKWKFAVQNPGPRYFICNADESEPGTFKDRIIIERDPHLLIEGIIISSYAIGANEAYIYIRGEYPAGYYILRDAIEEAKKKGFLGKNILGSGFDLEIYVARGAGAYICGEETALIESLEGKRGHPRLKPPYPVQKGLWGKPTVVNNVETIANVPFIISMGWEEYRYIGPSDYAGPKLFPVSGKVKKPGVYELPMNTTLREVIFKYAGGTLGNKKVKAVFSGALDCFSSEELDIPMDYSPLGFGGTGTVIVLTEEDDIVEAALKIAEFYEHETCGQCTPCRVGCYEQANLLEKIYKGEATEQDWEGFDFVNRNIQPTSICGLGAVAGRLIRQTLEKFPEEWEKYRKKSASLPL</sequence>
<keyword id="KW-0002">3D-structure</keyword>
<keyword id="KW-0004">4Fe-4S</keyword>
<keyword id="KW-0285">Flavoprotein</keyword>
<keyword id="KW-0288">FMN</keyword>
<keyword id="KW-0408">Iron</keyword>
<keyword id="KW-0411">Iron-sulfur</keyword>
<keyword id="KW-0479">Metal-binding</keyword>
<keyword id="KW-0520">NAD</keyword>
<keyword id="KW-0874">Quinone</keyword>
<keyword id="KW-1185">Reference proteome</keyword>
<keyword id="KW-1278">Translocase</keyword>
<feature type="chain" id="PRO_0000118570" description="NADH-quinone oxidoreductase subunit F">
    <location>
        <begin position="1"/>
        <end position="426"/>
    </location>
</feature>
<feature type="binding site" evidence="1">
    <location>
        <begin position="65"/>
        <end position="74"/>
    </location>
    <ligand>
        <name>NAD(+)</name>
        <dbReference type="ChEBI" id="CHEBI:57540"/>
    </ligand>
</feature>
<feature type="binding site" evidence="1">
    <location>
        <begin position="176"/>
        <end position="223"/>
    </location>
    <ligand>
        <name>FMN</name>
        <dbReference type="ChEBI" id="CHEBI:58210"/>
    </ligand>
</feature>
<feature type="binding site" evidence="2">
    <location>
        <position position="347"/>
    </location>
    <ligand>
        <name>[4Fe-4S] cluster</name>
        <dbReference type="ChEBI" id="CHEBI:49883"/>
    </ligand>
</feature>
<feature type="binding site" evidence="2">
    <location>
        <position position="350"/>
    </location>
    <ligand>
        <name>[4Fe-4S] cluster</name>
        <dbReference type="ChEBI" id="CHEBI:49883"/>
    </ligand>
</feature>
<feature type="binding site" evidence="2">
    <location>
        <position position="353"/>
    </location>
    <ligand>
        <name>[4Fe-4S] cluster</name>
        <dbReference type="ChEBI" id="CHEBI:49883"/>
    </ligand>
</feature>
<feature type="binding site" evidence="2">
    <location>
        <position position="393"/>
    </location>
    <ligand>
        <name>[4Fe-4S] cluster</name>
        <dbReference type="ChEBI" id="CHEBI:49883"/>
    </ligand>
</feature>
<feature type="strand" evidence="5">
    <location>
        <begin position="12"/>
        <end position="16"/>
    </location>
</feature>
<feature type="turn" evidence="5">
    <location>
        <begin position="19"/>
        <end position="24"/>
    </location>
</feature>
<feature type="strand" evidence="5">
    <location>
        <begin position="25"/>
        <end position="27"/>
    </location>
</feature>
<feature type="helix" evidence="5">
    <location>
        <begin position="31"/>
        <end position="36"/>
    </location>
</feature>
<feature type="turn" evidence="5">
    <location>
        <begin position="37"/>
        <end position="40"/>
    </location>
</feature>
<feature type="helix" evidence="5">
    <location>
        <begin position="41"/>
        <end position="47"/>
    </location>
</feature>
<feature type="helix" evidence="5">
    <location>
        <begin position="51"/>
        <end position="60"/>
    </location>
</feature>
<feature type="strand" evidence="5">
    <location>
        <begin position="66"/>
        <end position="69"/>
    </location>
</feature>
<feature type="helix" evidence="5">
    <location>
        <begin position="73"/>
        <end position="81"/>
    </location>
</feature>
<feature type="strand" evidence="5">
    <location>
        <begin position="87"/>
        <end position="93"/>
    </location>
</feature>
<feature type="helix" evidence="5">
    <location>
        <begin position="102"/>
        <end position="109"/>
    </location>
</feature>
<feature type="helix" evidence="5">
    <location>
        <begin position="111"/>
        <end position="125"/>
    </location>
</feature>
<feature type="strand" evidence="5">
    <location>
        <begin position="127"/>
        <end position="134"/>
    </location>
</feature>
<feature type="helix" evidence="5">
    <location>
        <begin position="139"/>
        <end position="154"/>
    </location>
</feature>
<feature type="strand" evidence="5">
    <location>
        <begin position="157"/>
        <end position="161"/>
    </location>
</feature>
<feature type="helix" evidence="5">
    <location>
        <begin position="162"/>
        <end position="164"/>
    </location>
</feature>
<feature type="strand" evidence="5">
    <location>
        <begin position="169"/>
        <end position="175"/>
    </location>
</feature>
<feature type="helix" evidence="5">
    <location>
        <begin position="180"/>
        <end position="183"/>
    </location>
</feature>
<feature type="helix" evidence="5">
    <location>
        <begin position="185"/>
        <end position="192"/>
    </location>
</feature>
<feature type="strand" evidence="5">
    <location>
        <begin position="202"/>
        <end position="204"/>
    </location>
</feature>
<feature type="turn" evidence="5">
    <location>
        <begin position="206"/>
        <end position="208"/>
    </location>
</feature>
<feature type="helix" evidence="5">
    <location>
        <begin position="211"/>
        <end position="213"/>
    </location>
</feature>
<feature type="strand" evidence="5">
    <location>
        <begin position="216"/>
        <end position="220"/>
    </location>
</feature>
<feature type="helix" evidence="5">
    <location>
        <begin position="221"/>
        <end position="225"/>
    </location>
</feature>
<feature type="helix" evidence="5">
    <location>
        <begin position="227"/>
        <end position="233"/>
    </location>
</feature>
<feature type="helix" evidence="5">
    <location>
        <begin position="235"/>
        <end position="239"/>
    </location>
</feature>
<feature type="helix" evidence="4">
    <location>
        <begin position="244"/>
        <end position="246"/>
    </location>
</feature>
<feature type="strand" evidence="5">
    <location>
        <begin position="248"/>
        <end position="260"/>
    </location>
</feature>
<feature type="strand" evidence="5">
    <location>
        <begin position="262"/>
        <end position="267"/>
    </location>
</feature>
<feature type="helix" evidence="5">
    <location>
        <begin position="272"/>
        <end position="277"/>
    </location>
</feature>
<feature type="helix" evidence="5">
    <location>
        <begin position="284"/>
        <end position="286"/>
    </location>
</feature>
<feature type="strand" evidence="5">
    <location>
        <begin position="289"/>
        <end position="294"/>
    </location>
</feature>
<feature type="turn" evidence="5">
    <location>
        <begin position="295"/>
        <end position="297"/>
    </location>
</feature>
<feature type="strand" evidence="5">
    <location>
        <begin position="298"/>
        <end position="301"/>
    </location>
</feature>
<feature type="helix" evidence="5">
    <location>
        <begin position="302"/>
        <end position="304"/>
    </location>
</feature>
<feature type="strand" evidence="5">
    <location>
        <begin position="307"/>
        <end position="312"/>
    </location>
</feature>
<feature type="strand" evidence="5">
    <location>
        <begin position="322"/>
        <end position="326"/>
    </location>
</feature>
<feature type="helix" evidence="5">
    <location>
        <begin position="331"/>
        <end position="345"/>
    </location>
</feature>
<feature type="strand" evidence="5">
    <location>
        <begin position="348"/>
        <end position="350"/>
    </location>
</feature>
<feature type="helix" evidence="5">
    <location>
        <begin position="351"/>
        <end position="368"/>
    </location>
</feature>
<feature type="helix" evidence="5">
    <location>
        <begin position="374"/>
        <end position="384"/>
    </location>
</feature>
<feature type="strand" evidence="5">
    <location>
        <begin position="386"/>
        <end position="388"/>
    </location>
</feature>
<feature type="helix" evidence="5">
    <location>
        <begin position="394"/>
        <end position="398"/>
    </location>
</feature>
<feature type="helix" evidence="5">
    <location>
        <begin position="401"/>
        <end position="409"/>
    </location>
</feature>
<feature type="helix" evidence="5">
    <location>
        <begin position="411"/>
        <end position="419"/>
    </location>
</feature>